<comment type="function">
    <text evidence="3">Thiamine-regulated, high affinity import carrier of pyridoxine, pyridoxal and pyridoxamine. Also imports, but does not export, amiloride and so confers sensitivity.</text>
</comment>
<comment type="subcellular location">
    <subcellularLocation>
        <location evidence="3">Membrane</location>
        <topology evidence="3">Multi-pass membrane protein</topology>
    </subcellularLocation>
    <text>During mitosis, also localizes to the septum.</text>
</comment>
<comment type="similarity">
    <text evidence="4">Belongs to the major facilitator superfamily. CAR1 family.</text>
</comment>
<feature type="chain" id="PRO_0000173433" description="Vitamin B6 transporter bsu1">
    <location>
        <begin position="1"/>
        <end position="526"/>
    </location>
</feature>
<feature type="transmembrane region" description="Helical" evidence="1">
    <location>
        <begin position="81"/>
        <end position="101"/>
    </location>
</feature>
<feature type="transmembrane region" description="Helical" evidence="1">
    <location>
        <begin position="118"/>
        <end position="138"/>
    </location>
</feature>
<feature type="transmembrane region" description="Helical" evidence="1">
    <location>
        <begin position="147"/>
        <end position="167"/>
    </location>
</feature>
<feature type="transmembrane region" description="Helical" evidence="1">
    <location>
        <begin position="173"/>
        <end position="192"/>
    </location>
</feature>
<feature type="transmembrane region" description="Helical" evidence="1">
    <location>
        <begin position="204"/>
        <end position="224"/>
    </location>
</feature>
<feature type="transmembrane region" description="Helical" evidence="1">
    <location>
        <begin position="238"/>
        <end position="257"/>
    </location>
</feature>
<feature type="transmembrane region" description="Helical" evidence="1">
    <location>
        <begin position="314"/>
        <end position="330"/>
    </location>
</feature>
<feature type="transmembrane region" description="Helical" evidence="1">
    <location>
        <begin position="349"/>
        <end position="366"/>
    </location>
</feature>
<feature type="transmembrane region" description="Helical" evidence="1">
    <location>
        <begin position="387"/>
        <end position="407"/>
    </location>
</feature>
<feature type="transmembrane region" description="Helical" evidence="1">
    <location>
        <begin position="413"/>
        <end position="432"/>
    </location>
</feature>
<feature type="transmembrane region" description="Helical" evidence="1">
    <location>
        <begin position="444"/>
        <end position="461"/>
    </location>
</feature>
<feature type="transmembrane region" description="Helical" evidence="1">
    <location>
        <begin position="480"/>
        <end position="501"/>
    </location>
</feature>
<feature type="region of interest" description="Disordered" evidence="2">
    <location>
        <begin position="1"/>
        <end position="53"/>
    </location>
</feature>
<feature type="compositionally biased region" description="Basic and acidic residues" evidence="2">
    <location>
        <begin position="38"/>
        <end position="53"/>
    </location>
</feature>
<feature type="sequence conflict" description="In Ref. 1; CAA78411." evidence="4" ref="1">
    <original>SSQSD</original>
    <variation>PLNQI</variation>
    <location>
        <begin position="33"/>
        <end position="37"/>
    </location>
</feature>
<evidence type="ECO:0000255" key="1"/>
<evidence type="ECO:0000256" key="2">
    <source>
        <dbReference type="SAM" id="MobiDB-lite"/>
    </source>
</evidence>
<evidence type="ECO:0000269" key="3">
    <source>
    </source>
</evidence>
<evidence type="ECO:0000305" key="4"/>
<dbReference type="EMBL" id="Z14035">
    <property type="protein sequence ID" value="CAA78411.1"/>
    <property type="molecule type" value="Genomic_DNA"/>
</dbReference>
<dbReference type="EMBL" id="CU329670">
    <property type="protein sequence ID" value="CAB11084.2"/>
    <property type="molecule type" value="Genomic_DNA"/>
</dbReference>
<dbReference type="PIR" id="S39919">
    <property type="entry name" value="S39919"/>
</dbReference>
<dbReference type="RefSeq" id="XP_001713084.1">
    <property type="nucleotide sequence ID" value="XM_001713032.2"/>
</dbReference>
<dbReference type="BioGRID" id="280536">
    <property type="interactions" value="2"/>
</dbReference>
<dbReference type="FunCoup" id="P33532">
    <property type="interactions" value="7"/>
</dbReference>
<dbReference type="STRING" id="284812.P33532"/>
<dbReference type="TCDB" id="2.A.1.2.1">
    <property type="family name" value="the major facilitator superfamily (mfs)"/>
</dbReference>
<dbReference type="iPTMnet" id="P33532"/>
<dbReference type="PaxDb" id="4896-SPAC17A2.01.1"/>
<dbReference type="EnsemblFungi" id="SPAC17A2.01.1">
    <property type="protein sequence ID" value="SPAC17A2.01.1:pep"/>
    <property type="gene ID" value="SPAC17A2.01"/>
</dbReference>
<dbReference type="PomBase" id="SPAC17A2.01">
    <property type="gene designation" value="bsu1"/>
</dbReference>
<dbReference type="VEuPathDB" id="FungiDB:SPAC17A2.01"/>
<dbReference type="eggNOG" id="KOG0255">
    <property type="taxonomic scope" value="Eukaryota"/>
</dbReference>
<dbReference type="HOGENOM" id="CLU_008455_11_5_1"/>
<dbReference type="InParanoid" id="P33532"/>
<dbReference type="OMA" id="YVIWTSN"/>
<dbReference type="PhylomeDB" id="P33532"/>
<dbReference type="PRO" id="PR:P33532"/>
<dbReference type="Proteomes" id="UP000002485">
    <property type="component" value="Chromosome I"/>
</dbReference>
<dbReference type="GO" id="GO:0000324">
    <property type="term" value="C:fungal-type vacuole"/>
    <property type="evidence" value="ECO:0000314"/>
    <property type="project" value="PomBase"/>
</dbReference>
<dbReference type="GO" id="GO:0005886">
    <property type="term" value="C:plasma membrane"/>
    <property type="evidence" value="ECO:0000314"/>
    <property type="project" value="PomBase"/>
</dbReference>
<dbReference type="GO" id="GO:0031925">
    <property type="term" value="F:pyridoxal transmembrane transporter activity"/>
    <property type="evidence" value="ECO:0000314"/>
    <property type="project" value="PomBase"/>
</dbReference>
<dbReference type="GO" id="GO:0031927">
    <property type="term" value="F:pyridoxamine transmembrane transporter activity"/>
    <property type="evidence" value="ECO:0000314"/>
    <property type="project" value="PomBase"/>
</dbReference>
<dbReference type="GO" id="GO:0031928">
    <property type="term" value="F:pyridoxine transmembrane transporter activity"/>
    <property type="evidence" value="ECO:0000314"/>
    <property type="project" value="PomBase"/>
</dbReference>
<dbReference type="GO" id="GO:0015234">
    <property type="term" value="F:thiamine transmembrane transporter activity"/>
    <property type="evidence" value="ECO:0000316"/>
    <property type="project" value="PomBase"/>
</dbReference>
<dbReference type="GO" id="GO:0022857">
    <property type="term" value="F:transmembrane transporter activity"/>
    <property type="evidence" value="ECO:0000318"/>
    <property type="project" value="GO_Central"/>
</dbReference>
<dbReference type="GO" id="GO:1903090">
    <property type="term" value="P:pyridoxal transmembrane transport"/>
    <property type="evidence" value="ECO:0000314"/>
    <property type="project" value="PomBase"/>
</dbReference>
<dbReference type="GO" id="GO:1903091">
    <property type="term" value="P:pyridoxamine transmembrane transport"/>
    <property type="evidence" value="ECO:0000314"/>
    <property type="project" value="PomBase"/>
</dbReference>
<dbReference type="GO" id="GO:1903092">
    <property type="term" value="P:pyridoxine transmembrane transport"/>
    <property type="evidence" value="ECO:0000314"/>
    <property type="project" value="PomBase"/>
</dbReference>
<dbReference type="GO" id="GO:0071934">
    <property type="term" value="P:thiamine transmembrane transport"/>
    <property type="evidence" value="ECO:0000316"/>
    <property type="project" value="PomBase"/>
</dbReference>
<dbReference type="GO" id="GO:0055085">
    <property type="term" value="P:transmembrane transport"/>
    <property type="evidence" value="ECO:0000318"/>
    <property type="project" value="GO_Central"/>
</dbReference>
<dbReference type="CDD" id="cd17323">
    <property type="entry name" value="MFS_Tpo1_MDR_like"/>
    <property type="match status" value="1"/>
</dbReference>
<dbReference type="FunFam" id="1.20.1250.20:FF:000596">
    <property type="entry name" value="Vitamin b6 transporter bsu1"/>
    <property type="match status" value="1"/>
</dbReference>
<dbReference type="Gene3D" id="1.20.1250.20">
    <property type="entry name" value="MFS general substrate transporter like domains"/>
    <property type="match status" value="1"/>
</dbReference>
<dbReference type="InterPro" id="IPR011701">
    <property type="entry name" value="MFS"/>
</dbReference>
<dbReference type="InterPro" id="IPR020846">
    <property type="entry name" value="MFS_dom"/>
</dbReference>
<dbReference type="InterPro" id="IPR036259">
    <property type="entry name" value="MFS_trans_sf"/>
</dbReference>
<dbReference type="PANTHER" id="PTHR23502">
    <property type="entry name" value="MAJOR FACILITATOR SUPERFAMILY"/>
    <property type="match status" value="1"/>
</dbReference>
<dbReference type="PANTHER" id="PTHR23502:SF180">
    <property type="entry name" value="VITAMIN B6 TRANSPORTER BSU1"/>
    <property type="match status" value="1"/>
</dbReference>
<dbReference type="Pfam" id="PF07690">
    <property type="entry name" value="MFS_1"/>
    <property type="match status" value="1"/>
</dbReference>
<dbReference type="SUPFAM" id="SSF103473">
    <property type="entry name" value="MFS general substrate transporter"/>
    <property type="match status" value="1"/>
</dbReference>
<dbReference type="PROSITE" id="PS50850">
    <property type="entry name" value="MFS"/>
    <property type="match status" value="1"/>
</dbReference>
<sequence length="526" mass="58484">MASKIASLFSPSETASKDQHENVAEDLELGTASSQSDGIHETNSEYDEKKREESPEVIDISNLISSDHPAHPQNWHWAKRWSIVFMFCLMQIYVIWTSNGFGSIEYSVMAQFNVSAQVATLCLSMNILGSGLGPMFLGPLSDIGGRKPVYFCSIFVYTVFNISCALPRNIVQMIISHFIIGVAGSTALTNVAGGIPDLFPEDTAGVPMSLFVWACAGGAIGAPMATGVDINAKYGWRWLYYINIIVGGFFLIVILIIPETLPIKVITRYENAKGRIVEGIPKNNLKEVLKKCKFVTTMGFRMMLTEPIILSMGLYNFYAYGISYFFLTAIWPVFYDTYKMSEMGASCTYLSGFVASTLLFLYQPIQDWIFRRDKAKNNGVARPEARFTSALFITLLFPAGMFLFAFTCHPPFPWMSPIVGNSMVTVANGHNWMCILNYLTDSYPLLSGSAVAAFTLPSFIGATVFAHVSQIMFNNMSVKWAVATMAFISISIPFIIYTFYFFGQRIRALSSLTGNKALKYLPLENN</sequence>
<accession>P33532</accession>
<accession>O13866</accession>
<name>BSU1_SCHPO</name>
<protein>
    <recommendedName>
        <fullName>Vitamin B6 transporter bsu1</fullName>
    </recommendedName>
    <alternativeName>
        <fullName>Amiloride transporter car1</fullName>
    </alternativeName>
    <alternativeName>
        <fullName>Changed amiloride resistance protein 1</fullName>
    </alternativeName>
    <alternativeName>
        <fullName>Vitamin B6 uptake protein 1</fullName>
    </alternativeName>
</protein>
<organism>
    <name type="scientific">Schizosaccharomyces pombe (strain 972 / ATCC 24843)</name>
    <name type="common">Fission yeast</name>
    <dbReference type="NCBI Taxonomy" id="284812"/>
    <lineage>
        <taxon>Eukaryota</taxon>
        <taxon>Fungi</taxon>
        <taxon>Dikarya</taxon>
        <taxon>Ascomycota</taxon>
        <taxon>Taphrinomycotina</taxon>
        <taxon>Schizosaccharomycetes</taxon>
        <taxon>Schizosaccharomycetales</taxon>
        <taxon>Schizosaccharomycetaceae</taxon>
        <taxon>Schizosaccharomyces</taxon>
    </lineage>
</organism>
<gene>
    <name type="primary">bsu1</name>
    <name type="synonym">car1</name>
    <name type="synonym">sod1</name>
    <name type="ORF">SPAC17A2.01</name>
</gene>
<proteinExistence type="inferred from homology"/>
<keyword id="KW-0472">Membrane</keyword>
<keyword id="KW-1185">Reference proteome</keyword>
<keyword id="KW-0812">Transmembrane</keyword>
<keyword id="KW-1133">Transmembrane helix</keyword>
<keyword id="KW-0813">Transport</keyword>
<reference key="1">
    <citation type="journal article" date="1993" name="Mol. Gen. Genet.">
        <title>The amiloride resistance gene, car1, of Schizosaccharomyces pombe.</title>
        <authorList>
            <person name="Jia Z.-P."/>
            <person name="McCullough N."/>
            <person name="Wong L."/>
            <person name="Young P.G."/>
        </authorList>
    </citation>
    <scope>NUCLEOTIDE SEQUENCE [GENOMIC DNA]</scope>
</reference>
<reference key="2">
    <citation type="journal article" date="2002" name="Nature">
        <title>The genome sequence of Schizosaccharomyces pombe.</title>
        <authorList>
            <person name="Wood V."/>
            <person name="Gwilliam R."/>
            <person name="Rajandream M.A."/>
            <person name="Lyne M.H."/>
            <person name="Lyne R."/>
            <person name="Stewart A."/>
            <person name="Sgouros J.G."/>
            <person name="Peat N."/>
            <person name="Hayles J."/>
            <person name="Baker S.G."/>
            <person name="Basham D."/>
            <person name="Bowman S."/>
            <person name="Brooks K."/>
            <person name="Brown D."/>
            <person name="Brown S."/>
            <person name="Chillingworth T."/>
            <person name="Churcher C.M."/>
            <person name="Collins M."/>
            <person name="Connor R."/>
            <person name="Cronin A."/>
            <person name="Davis P."/>
            <person name="Feltwell T."/>
            <person name="Fraser A."/>
            <person name="Gentles S."/>
            <person name="Goble A."/>
            <person name="Hamlin N."/>
            <person name="Harris D.E."/>
            <person name="Hidalgo J."/>
            <person name="Hodgson G."/>
            <person name="Holroyd S."/>
            <person name="Hornsby T."/>
            <person name="Howarth S."/>
            <person name="Huckle E.J."/>
            <person name="Hunt S."/>
            <person name="Jagels K."/>
            <person name="James K.D."/>
            <person name="Jones L."/>
            <person name="Jones M."/>
            <person name="Leather S."/>
            <person name="McDonald S."/>
            <person name="McLean J."/>
            <person name="Mooney P."/>
            <person name="Moule S."/>
            <person name="Mungall K.L."/>
            <person name="Murphy L.D."/>
            <person name="Niblett D."/>
            <person name="Odell C."/>
            <person name="Oliver K."/>
            <person name="O'Neil S."/>
            <person name="Pearson D."/>
            <person name="Quail M.A."/>
            <person name="Rabbinowitsch E."/>
            <person name="Rutherford K.M."/>
            <person name="Rutter S."/>
            <person name="Saunders D."/>
            <person name="Seeger K."/>
            <person name="Sharp S."/>
            <person name="Skelton J."/>
            <person name="Simmonds M.N."/>
            <person name="Squares R."/>
            <person name="Squares S."/>
            <person name="Stevens K."/>
            <person name="Taylor K."/>
            <person name="Taylor R.G."/>
            <person name="Tivey A."/>
            <person name="Walsh S.V."/>
            <person name="Warren T."/>
            <person name="Whitehead S."/>
            <person name="Woodward J.R."/>
            <person name="Volckaert G."/>
            <person name="Aert R."/>
            <person name="Robben J."/>
            <person name="Grymonprez B."/>
            <person name="Weltjens I."/>
            <person name="Vanstreels E."/>
            <person name="Rieger M."/>
            <person name="Schaefer M."/>
            <person name="Mueller-Auer S."/>
            <person name="Gabel C."/>
            <person name="Fuchs M."/>
            <person name="Duesterhoeft A."/>
            <person name="Fritzc C."/>
            <person name="Holzer E."/>
            <person name="Moestl D."/>
            <person name="Hilbert H."/>
            <person name="Borzym K."/>
            <person name="Langer I."/>
            <person name="Beck A."/>
            <person name="Lehrach H."/>
            <person name="Reinhardt R."/>
            <person name="Pohl T.M."/>
            <person name="Eger P."/>
            <person name="Zimmermann W."/>
            <person name="Wedler H."/>
            <person name="Wambutt R."/>
            <person name="Purnelle B."/>
            <person name="Goffeau A."/>
            <person name="Cadieu E."/>
            <person name="Dreano S."/>
            <person name="Gloux S."/>
            <person name="Lelaure V."/>
            <person name="Mottier S."/>
            <person name="Galibert F."/>
            <person name="Aves S.J."/>
            <person name="Xiang Z."/>
            <person name="Hunt C."/>
            <person name="Moore K."/>
            <person name="Hurst S.M."/>
            <person name="Lucas M."/>
            <person name="Rochet M."/>
            <person name="Gaillardin C."/>
            <person name="Tallada V.A."/>
            <person name="Garzon A."/>
            <person name="Thode G."/>
            <person name="Daga R.R."/>
            <person name="Cruzado L."/>
            <person name="Jimenez J."/>
            <person name="Sanchez M."/>
            <person name="del Rey F."/>
            <person name="Benito J."/>
            <person name="Dominguez A."/>
            <person name="Revuelta J.L."/>
            <person name="Moreno S."/>
            <person name="Armstrong J."/>
            <person name="Forsburg S.L."/>
            <person name="Cerutti L."/>
            <person name="Lowe T."/>
            <person name="McCombie W.R."/>
            <person name="Paulsen I."/>
            <person name="Potashkin J."/>
            <person name="Shpakovski G.V."/>
            <person name="Ussery D."/>
            <person name="Barrell B.G."/>
            <person name="Nurse P."/>
        </authorList>
    </citation>
    <scope>NUCLEOTIDE SEQUENCE [LARGE SCALE GENOMIC DNA]</scope>
    <source>
        <strain>972 / ATCC 24843</strain>
    </source>
</reference>
<reference key="3">
    <citation type="journal article" date="2005" name="Eukaryot. Cell">
        <title>Amiloride uptake and toxicity in fission yeast are caused by the pyridoxine transporter encoded by bsu1+ (car1+).</title>
        <authorList>
            <person name="Stolz J."/>
            <person name="Woehrmann H.J."/>
            <person name="Vogl C."/>
        </authorList>
    </citation>
    <scope>FUNCTION</scope>
    <scope>SUBCELLULAR LOCATION</scope>
</reference>